<keyword id="KW-0496">Mitochondrion</keyword>
<keyword id="KW-0687">Ribonucleoprotein</keyword>
<keyword id="KW-0689">Ribosomal protein</keyword>
<name>RT12_PROWI</name>
<protein>
    <recommendedName>
        <fullName evidence="2">Small ribosomal subunit protein uS12m</fullName>
    </recommendedName>
    <alternativeName>
        <fullName>Ribosomal protein S12, mitochondrial</fullName>
    </alternativeName>
</protein>
<accession>P46744</accession>
<reference key="1">
    <citation type="journal article" date="1994" name="J. Mol. Biol.">
        <title>Complete sequence of the mitochondrial DNA of the chlorophyte alga Prototheca wickerhamii. Gene content and genome organization.</title>
        <authorList>
            <person name="Wolff G."/>
            <person name="Plante I."/>
            <person name="Lang B.F."/>
            <person name="Kueck U."/>
            <person name="Burger G."/>
        </authorList>
    </citation>
    <scope>NUCLEOTIDE SEQUENCE [GENOMIC DNA]</scope>
    <source>
        <strain>263-11</strain>
    </source>
</reference>
<organism>
    <name type="scientific">Prototheca wickerhamii</name>
    <dbReference type="NCBI Taxonomy" id="3111"/>
    <lineage>
        <taxon>Eukaryota</taxon>
        <taxon>Viridiplantae</taxon>
        <taxon>Chlorophyta</taxon>
        <taxon>core chlorophytes</taxon>
        <taxon>Trebouxiophyceae</taxon>
        <taxon>Chlorellales</taxon>
        <taxon>Chlorellaceae</taxon>
        <taxon>Prototheca</taxon>
    </lineage>
</organism>
<gene>
    <name type="primary">RPS12</name>
</gene>
<evidence type="ECO:0000256" key="1">
    <source>
        <dbReference type="SAM" id="MobiDB-lite"/>
    </source>
</evidence>
<evidence type="ECO:0000305" key="2"/>
<dbReference type="EMBL" id="U02970">
    <property type="protein sequence ID" value="AAD12660.1"/>
    <property type="molecule type" value="Genomic_DNA"/>
</dbReference>
<dbReference type="PIR" id="T11941">
    <property type="entry name" value="T11941"/>
</dbReference>
<dbReference type="RefSeq" id="NP_042272.1">
    <property type="nucleotide sequence ID" value="NC_001613.1"/>
</dbReference>
<dbReference type="SMR" id="P46744"/>
<dbReference type="GeneID" id="802146"/>
<dbReference type="GO" id="GO:0005739">
    <property type="term" value="C:mitochondrion"/>
    <property type="evidence" value="ECO:0007669"/>
    <property type="project" value="UniProtKB-SubCell"/>
</dbReference>
<dbReference type="GO" id="GO:0015935">
    <property type="term" value="C:small ribosomal subunit"/>
    <property type="evidence" value="ECO:0007669"/>
    <property type="project" value="InterPro"/>
</dbReference>
<dbReference type="GO" id="GO:0003735">
    <property type="term" value="F:structural constituent of ribosome"/>
    <property type="evidence" value="ECO:0007669"/>
    <property type="project" value="InterPro"/>
</dbReference>
<dbReference type="GO" id="GO:0006412">
    <property type="term" value="P:translation"/>
    <property type="evidence" value="ECO:0007669"/>
    <property type="project" value="InterPro"/>
</dbReference>
<dbReference type="CDD" id="cd03368">
    <property type="entry name" value="Ribosomal_S12"/>
    <property type="match status" value="1"/>
</dbReference>
<dbReference type="FunFam" id="2.40.50.140:FF:000099">
    <property type="entry name" value="Ribosomal protein S12, mitochondrial"/>
    <property type="match status" value="1"/>
</dbReference>
<dbReference type="Gene3D" id="2.40.50.140">
    <property type="entry name" value="Nucleic acid-binding proteins"/>
    <property type="match status" value="1"/>
</dbReference>
<dbReference type="HAMAP" id="MF_00403_B">
    <property type="entry name" value="Ribosomal_uS12_B"/>
    <property type="match status" value="1"/>
</dbReference>
<dbReference type="InterPro" id="IPR012340">
    <property type="entry name" value="NA-bd_OB-fold"/>
</dbReference>
<dbReference type="InterPro" id="IPR006032">
    <property type="entry name" value="Ribosomal_uS12"/>
</dbReference>
<dbReference type="InterPro" id="IPR005679">
    <property type="entry name" value="Ribosomal_uS12_bac"/>
</dbReference>
<dbReference type="NCBIfam" id="TIGR00981">
    <property type="entry name" value="rpsL_bact"/>
    <property type="match status" value="1"/>
</dbReference>
<dbReference type="PANTHER" id="PTHR11652">
    <property type="entry name" value="30S RIBOSOMAL PROTEIN S12 FAMILY MEMBER"/>
    <property type="match status" value="1"/>
</dbReference>
<dbReference type="Pfam" id="PF00164">
    <property type="entry name" value="Ribosom_S12_S23"/>
    <property type="match status" value="1"/>
</dbReference>
<dbReference type="PIRSF" id="PIRSF002133">
    <property type="entry name" value="Ribosomal_S12/S23"/>
    <property type="match status" value="1"/>
</dbReference>
<dbReference type="PRINTS" id="PR01034">
    <property type="entry name" value="RIBOSOMALS12"/>
</dbReference>
<dbReference type="SUPFAM" id="SSF50249">
    <property type="entry name" value="Nucleic acid-binding proteins"/>
    <property type="match status" value="1"/>
</dbReference>
<dbReference type="PROSITE" id="PS00055">
    <property type="entry name" value="RIBOSOMAL_S12"/>
    <property type="match status" value="1"/>
</dbReference>
<proteinExistence type="inferred from homology"/>
<feature type="chain" id="PRO_0000146450" description="Small ribosomal subunit protein uS12m">
    <location>
        <begin position="1"/>
        <end position="125"/>
    </location>
</feature>
<feature type="region of interest" description="Disordered" evidence="1">
    <location>
        <begin position="1"/>
        <end position="26"/>
    </location>
</feature>
<feature type="compositionally biased region" description="Basic residues" evidence="1">
    <location>
        <begin position="8"/>
        <end position="23"/>
    </location>
</feature>
<sequence>MPTINQLLRKKSSRQAPKLKSKKPALAGCPQKRGVCFRVYTRTPKKPNSALRKVAKIRLCNGIVVIASIPGEGHNLQEHSVVCIRGGRVKDLPGVKYKVVRGRLDLQGVVNRKQSRSLYGTPKSK</sequence>
<geneLocation type="mitochondrion"/>
<comment type="subcellular location">
    <subcellularLocation>
        <location>Mitochondrion</location>
    </subcellularLocation>
</comment>
<comment type="similarity">
    <text evidence="2">Belongs to the universal ribosomal protein uS12 family.</text>
</comment>